<reference key="1">
    <citation type="journal article" date="1996" name="Science">
        <title>Complete genome sequence of the methanogenic archaeon, Methanococcus jannaschii.</title>
        <authorList>
            <person name="Bult C.J."/>
            <person name="White O."/>
            <person name="Olsen G.J."/>
            <person name="Zhou L."/>
            <person name="Fleischmann R.D."/>
            <person name="Sutton G.G."/>
            <person name="Blake J.A."/>
            <person name="FitzGerald L.M."/>
            <person name="Clayton R.A."/>
            <person name="Gocayne J.D."/>
            <person name="Kerlavage A.R."/>
            <person name="Dougherty B.A."/>
            <person name="Tomb J.-F."/>
            <person name="Adams M.D."/>
            <person name="Reich C.I."/>
            <person name="Overbeek R."/>
            <person name="Kirkness E.F."/>
            <person name="Weinstock K.G."/>
            <person name="Merrick J.M."/>
            <person name="Glodek A."/>
            <person name="Scott J.L."/>
            <person name="Geoghagen N.S.M."/>
            <person name="Weidman J.F."/>
            <person name="Fuhrmann J.L."/>
            <person name="Nguyen D."/>
            <person name="Utterback T.R."/>
            <person name="Kelley J.M."/>
            <person name="Peterson J.D."/>
            <person name="Sadow P.W."/>
            <person name="Hanna M.C."/>
            <person name="Cotton M.D."/>
            <person name="Roberts K.M."/>
            <person name="Hurst M.A."/>
            <person name="Kaine B.P."/>
            <person name="Borodovsky M."/>
            <person name="Klenk H.-P."/>
            <person name="Fraser C.M."/>
            <person name="Smith H.O."/>
            <person name="Woese C.R."/>
            <person name="Venter J.C."/>
        </authorList>
    </citation>
    <scope>NUCLEOTIDE SEQUENCE [LARGE SCALE GENOMIC DNA]</scope>
    <source>
        <strain>ATCC 43067 / DSM 2661 / JAL-1 / JCM 10045 / NBRC 100440</strain>
    </source>
</reference>
<accession>Q58331</accession>
<proteinExistence type="predicted"/>
<protein>
    <recommendedName>
        <fullName>Uncharacterized protein MJ0921</fullName>
    </recommendedName>
</protein>
<sequence length="300" mass="33031">MSVNYKSVIAMVDDALNLVEIVEEHPCPNGSEWVIYQYQRTSPLILSAWREGNKHHFVTKIGKEKLNLVPSLSAAGIEEVYIENNRVHIVYAGLAGGGVGAELRKGAKNVLEVNILEKGGGSRLGKAEVITPKMEKVIIGIDDTDTKEEGATWVLAHEIGLEVEKEGLGYYLDHTIVQLYPGNPNKTQNCVSIALSFAVYPEYKYKLDKFIKKLLKERSLSDETAMAVYYGLFPSKSMKLFALKAKKEMVKIEEAKSIALRNNIKIIPINGEGGIIGAVAALGLAEHHSLAPKLCEDIKL</sequence>
<name>Y921_METJA</name>
<gene>
    <name type="ordered locus">MJ0921</name>
</gene>
<feature type="chain" id="PRO_0000107106" description="Uncharacterized protein MJ0921">
    <location>
        <begin position="1"/>
        <end position="300"/>
    </location>
</feature>
<dbReference type="EMBL" id="L77117">
    <property type="protein sequence ID" value="AAB98925.1"/>
    <property type="molecule type" value="Genomic_DNA"/>
</dbReference>
<dbReference type="PIR" id="A64415">
    <property type="entry name" value="A64415"/>
</dbReference>
<dbReference type="RefSeq" id="WP_010870435.1">
    <property type="nucleotide sequence ID" value="NC_000909.1"/>
</dbReference>
<dbReference type="SMR" id="Q58331"/>
<dbReference type="FunCoup" id="Q58331">
    <property type="interactions" value="11"/>
</dbReference>
<dbReference type="STRING" id="243232.MJ_0921"/>
<dbReference type="PaxDb" id="243232-MJ_0921"/>
<dbReference type="EnsemblBacteria" id="AAB98925">
    <property type="protein sequence ID" value="AAB98925"/>
    <property type="gene ID" value="MJ_0921"/>
</dbReference>
<dbReference type="GeneID" id="1451810"/>
<dbReference type="KEGG" id="mja:MJ_0921"/>
<dbReference type="eggNOG" id="arCOG01116">
    <property type="taxonomic scope" value="Archaea"/>
</dbReference>
<dbReference type="HOGENOM" id="CLU_065511_0_0_2"/>
<dbReference type="InParanoid" id="Q58331"/>
<dbReference type="OrthoDB" id="52716at2157"/>
<dbReference type="PhylomeDB" id="Q58331"/>
<dbReference type="Proteomes" id="UP000000805">
    <property type="component" value="Chromosome"/>
</dbReference>
<dbReference type="Gene3D" id="3.30.70.2200">
    <property type="match status" value="1"/>
</dbReference>
<dbReference type="InterPro" id="IPR017674">
    <property type="entry name" value="Methan_mark_11"/>
</dbReference>
<dbReference type="InterPro" id="IPR053870">
    <property type="entry name" value="TiaS-like_TCKD"/>
</dbReference>
<dbReference type="NCBIfam" id="TIGR03280">
    <property type="entry name" value="methan_mark_11"/>
    <property type="match status" value="1"/>
</dbReference>
<dbReference type="PANTHER" id="PTHR40705:SF2">
    <property type="entry name" value="DUF1743 DOMAIN-CONTAINING PROTEIN"/>
    <property type="match status" value="1"/>
</dbReference>
<dbReference type="PANTHER" id="PTHR40705">
    <property type="entry name" value="TRNA(ILE2) 2-AGMATINYLCYTIDINE SYNTHETASE TIAS"/>
    <property type="match status" value="1"/>
</dbReference>
<dbReference type="Pfam" id="PF22641">
    <property type="entry name" value="TiaS_TCKD"/>
    <property type="match status" value="1"/>
</dbReference>
<keyword id="KW-1185">Reference proteome</keyword>
<organism>
    <name type="scientific">Methanocaldococcus jannaschii (strain ATCC 43067 / DSM 2661 / JAL-1 / JCM 10045 / NBRC 100440)</name>
    <name type="common">Methanococcus jannaschii</name>
    <dbReference type="NCBI Taxonomy" id="243232"/>
    <lineage>
        <taxon>Archaea</taxon>
        <taxon>Methanobacteriati</taxon>
        <taxon>Methanobacteriota</taxon>
        <taxon>Methanomada group</taxon>
        <taxon>Methanococci</taxon>
        <taxon>Methanococcales</taxon>
        <taxon>Methanocaldococcaceae</taxon>
        <taxon>Methanocaldococcus</taxon>
    </lineage>
</organism>